<dbReference type="EC" id="4.2.1.17"/>
<dbReference type="EMBL" id="L39265">
    <property type="protein sequence ID" value="AAA91095.1"/>
    <property type="molecule type" value="Genomic_DNA"/>
</dbReference>
<dbReference type="EMBL" id="AL591688">
    <property type="protein sequence ID" value="CAC41803.1"/>
    <property type="molecule type" value="Genomic_DNA"/>
</dbReference>
<dbReference type="RefSeq" id="NP_384472.1">
    <property type="nucleotide sequence ID" value="NC_003047.1"/>
</dbReference>
<dbReference type="RefSeq" id="WP_010968532.1">
    <property type="nucleotide sequence ID" value="NC_003047.1"/>
</dbReference>
<dbReference type="SMR" id="Q52995"/>
<dbReference type="EnsemblBacteria" id="CAC41803">
    <property type="protein sequence ID" value="CAC41803"/>
    <property type="gene ID" value="SMc01153"/>
</dbReference>
<dbReference type="KEGG" id="sme:SMc01153"/>
<dbReference type="PATRIC" id="fig|266834.11.peg.1738"/>
<dbReference type="eggNOG" id="COG1024">
    <property type="taxonomic scope" value="Bacteria"/>
</dbReference>
<dbReference type="HOGENOM" id="CLU_009834_7_6_5"/>
<dbReference type="OrthoDB" id="9775794at2"/>
<dbReference type="Proteomes" id="UP000001976">
    <property type="component" value="Chromosome"/>
</dbReference>
<dbReference type="GO" id="GO:0004300">
    <property type="term" value="F:enoyl-CoA hydratase activity"/>
    <property type="evidence" value="ECO:0007669"/>
    <property type="project" value="UniProtKB-EC"/>
</dbReference>
<dbReference type="GO" id="GO:0006635">
    <property type="term" value="P:fatty acid beta-oxidation"/>
    <property type="evidence" value="ECO:0007669"/>
    <property type="project" value="TreeGrafter"/>
</dbReference>
<dbReference type="CDD" id="cd06558">
    <property type="entry name" value="crotonase-like"/>
    <property type="match status" value="1"/>
</dbReference>
<dbReference type="FunFam" id="3.90.226.10:FF:000019">
    <property type="entry name" value="Enoyl-CoA hydratase, mitochondrial"/>
    <property type="match status" value="1"/>
</dbReference>
<dbReference type="FunFam" id="1.10.12.10:FF:000001">
    <property type="entry name" value="Probable enoyl-CoA hydratase, mitochondrial"/>
    <property type="match status" value="1"/>
</dbReference>
<dbReference type="Gene3D" id="3.90.226.10">
    <property type="entry name" value="2-enoyl-CoA Hydratase, Chain A, domain 1"/>
    <property type="match status" value="1"/>
</dbReference>
<dbReference type="Gene3D" id="1.10.12.10">
    <property type="entry name" value="Lyase 2-enoyl-coa Hydratase, Chain A, domain 2"/>
    <property type="match status" value="1"/>
</dbReference>
<dbReference type="InterPro" id="IPR029045">
    <property type="entry name" value="ClpP/crotonase-like_dom_sf"/>
</dbReference>
<dbReference type="InterPro" id="IPR018376">
    <property type="entry name" value="Enoyl-CoA_hyd/isom_CS"/>
</dbReference>
<dbReference type="InterPro" id="IPR001753">
    <property type="entry name" value="Enoyl-CoA_hydra/iso"/>
</dbReference>
<dbReference type="InterPro" id="IPR014748">
    <property type="entry name" value="Enoyl-CoA_hydra_C"/>
</dbReference>
<dbReference type="NCBIfam" id="NF004517">
    <property type="entry name" value="PRK05862.1"/>
    <property type="match status" value="1"/>
</dbReference>
<dbReference type="PANTHER" id="PTHR11941:SF54">
    <property type="entry name" value="ENOYL-COA HYDRATASE, MITOCHONDRIAL"/>
    <property type="match status" value="1"/>
</dbReference>
<dbReference type="PANTHER" id="PTHR11941">
    <property type="entry name" value="ENOYL-COA HYDRATASE-RELATED"/>
    <property type="match status" value="1"/>
</dbReference>
<dbReference type="Pfam" id="PF00378">
    <property type="entry name" value="ECH_1"/>
    <property type="match status" value="1"/>
</dbReference>
<dbReference type="SUPFAM" id="SSF52096">
    <property type="entry name" value="ClpP/crotonase"/>
    <property type="match status" value="1"/>
</dbReference>
<dbReference type="PROSITE" id="PS00166">
    <property type="entry name" value="ENOYL_COA_HYDRATASE"/>
    <property type="match status" value="1"/>
</dbReference>
<evidence type="ECO:0000250" key="1"/>
<evidence type="ECO:0000305" key="2"/>
<feature type="chain" id="PRO_0000109344" description="Probable enoyl-CoA hydratase">
    <location>
        <begin position="1"/>
        <end position="257"/>
    </location>
</feature>
<feature type="sequence conflict" description="In Ref. 1; AAA91095." evidence="2" ref="1">
    <original>Q</original>
    <variation>L</variation>
    <location>
        <position position="129"/>
    </location>
</feature>
<feature type="sequence conflict" description="In Ref. 1; AAA91095." evidence="2" ref="1">
    <original>I</original>
    <variation>T</variation>
    <location>
        <position position="196"/>
    </location>
</feature>
<feature type="sequence conflict" description="In Ref. 1; AAA91095." evidence="2" ref="1">
    <original>A</original>
    <variation>T</variation>
    <location>
        <position position="220"/>
    </location>
</feature>
<keyword id="KW-0276">Fatty acid metabolism</keyword>
<keyword id="KW-0443">Lipid metabolism</keyword>
<keyword id="KW-0456">Lyase</keyword>
<keyword id="KW-1185">Reference proteome</keyword>
<name>ECHH_RHIME</name>
<reference key="1">
    <citation type="journal article" date="1995" name="J. Bacteriol.">
        <title>The dnaA gene of Rhizobium meliloti lies within an unusual gene arrangement.</title>
        <authorList>
            <person name="Margolin W."/>
            <person name="Bramhill D."/>
            <person name="Long S.R."/>
        </authorList>
    </citation>
    <scope>NUCLEOTIDE SEQUENCE [GENOMIC DNA]</scope>
    <source>
        <strain>1021</strain>
    </source>
</reference>
<reference key="2">
    <citation type="journal article" date="2001" name="Proc. Natl. Acad. Sci. U.S.A.">
        <title>Analysis of the chromosome sequence of the legume symbiont Sinorhizobium meliloti strain 1021.</title>
        <authorList>
            <person name="Capela D."/>
            <person name="Barloy-Hubler F."/>
            <person name="Gouzy J."/>
            <person name="Bothe G."/>
            <person name="Ampe F."/>
            <person name="Batut J."/>
            <person name="Boistard P."/>
            <person name="Becker A."/>
            <person name="Boutry M."/>
            <person name="Cadieu E."/>
            <person name="Dreano S."/>
            <person name="Gloux S."/>
            <person name="Godrie T."/>
            <person name="Goffeau A."/>
            <person name="Kahn D."/>
            <person name="Kiss E."/>
            <person name="Lelaure V."/>
            <person name="Masuy D."/>
            <person name="Pohl T."/>
            <person name="Portetelle D."/>
            <person name="Puehler A."/>
            <person name="Purnelle B."/>
            <person name="Ramsperger U."/>
            <person name="Renard C."/>
            <person name="Thebault P."/>
            <person name="Vandenbol M."/>
            <person name="Weidner S."/>
            <person name="Galibert F."/>
        </authorList>
    </citation>
    <scope>NUCLEOTIDE SEQUENCE [LARGE SCALE GENOMIC DNA]</scope>
    <source>
        <strain>1021</strain>
    </source>
</reference>
<reference key="3">
    <citation type="journal article" date="2001" name="Science">
        <title>The composite genome of the legume symbiont Sinorhizobium meliloti.</title>
        <authorList>
            <person name="Galibert F."/>
            <person name="Finan T.M."/>
            <person name="Long S.R."/>
            <person name="Puehler A."/>
            <person name="Abola P."/>
            <person name="Ampe F."/>
            <person name="Barloy-Hubler F."/>
            <person name="Barnett M.J."/>
            <person name="Becker A."/>
            <person name="Boistard P."/>
            <person name="Bothe G."/>
            <person name="Boutry M."/>
            <person name="Bowser L."/>
            <person name="Buhrmester J."/>
            <person name="Cadieu E."/>
            <person name="Capela D."/>
            <person name="Chain P."/>
            <person name="Cowie A."/>
            <person name="Davis R.W."/>
            <person name="Dreano S."/>
            <person name="Federspiel N.A."/>
            <person name="Fisher R.F."/>
            <person name="Gloux S."/>
            <person name="Godrie T."/>
            <person name="Goffeau A."/>
            <person name="Golding B."/>
            <person name="Gouzy J."/>
            <person name="Gurjal M."/>
            <person name="Hernandez-Lucas I."/>
            <person name="Hong A."/>
            <person name="Huizar L."/>
            <person name="Hyman R.W."/>
            <person name="Jones T."/>
            <person name="Kahn D."/>
            <person name="Kahn M.L."/>
            <person name="Kalman S."/>
            <person name="Keating D.H."/>
            <person name="Kiss E."/>
            <person name="Komp C."/>
            <person name="Lelaure V."/>
            <person name="Masuy D."/>
            <person name="Palm C."/>
            <person name="Peck M.C."/>
            <person name="Pohl T.M."/>
            <person name="Portetelle D."/>
            <person name="Purnelle B."/>
            <person name="Ramsperger U."/>
            <person name="Surzycki R."/>
            <person name="Thebault P."/>
            <person name="Vandenbol M."/>
            <person name="Vorhoelter F.J."/>
            <person name="Weidner S."/>
            <person name="Wells D.H."/>
            <person name="Wong K."/>
            <person name="Yeh K.-C."/>
            <person name="Batut J."/>
        </authorList>
    </citation>
    <scope>NUCLEOTIDE SEQUENCE [LARGE SCALE GENOMIC DNA]</scope>
    <source>
        <strain>1021</strain>
    </source>
</reference>
<comment type="function">
    <text evidence="1">Could possibly oxidize fatty acids using specific components.</text>
</comment>
<comment type="catalytic activity">
    <reaction>
        <text>a (3S)-3-hydroxyacyl-CoA = a (2E)-enoyl-CoA + H2O</text>
        <dbReference type="Rhea" id="RHEA:16105"/>
        <dbReference type="ChEBI" id="CHEBI:15377"/>
        <dbReference type="ChEBI" id="CHEBI:57318"/>
        <dbReference type="ChEBI" id="CHEBI:58856"/>
        <dbReference type="EC" id="4.2.1.17"/>
    </reaction>
</comment>
<comment type="catalytic activity">
    <reaction>
        <text>a 4-saturated-(3S)-3-hydroxyacyl-CoA = a (3E)-enoyl-CoA + H2O</text>
        <dbReference type="Rhea" id="RHEA:20724"/>
        <dbReference type="ChEBI" id="CHEBI:15377"/>
        <dbReference type="ChEBI" id="CHEBI:58521"/>
        <dbReference type="ChEBI" id="CHEBI:137480"/>
        <dbReference type="EC" id="4.2.1.17"/>
    </reaction>
</comment>
<comment type="similarity">
    <text evidence="2">Belongs to the enoyl-CoA hydratase/isomerase family.</text>
</comment>
<organism>
    <name type="scientific">Rhizobium meliloti (strain 1021)</name>
    <name type="common">Ensifer meliloti</name>
    <name type="synonym">Sinorhizobium meliloti</name>
    <dbReference type="NCBI Taxonomy" id="266834"/>
    <lineage>
        <taxon>Bacteria</taxon>
        <taxon>Pseudomonadati</taxon>
        <taxon>Pseudomonadota</taxon>
        <taxon>Alphaproteobacteria</taxon>
        <taxon>Hyphomicrobiales</taxon>
        <taxon>Rhizobiaceae</taxon>
        <taxon>Sinorhizobium/Ensifer group</taxon>
        <taxon>Sinorhizobium</taxon>
    </lineage>
</organism>
<sequence length="257" mass="27472">MSYETLLVETQGRVGLITLNRPQALNALNAVLMRELDAALKAFDADRAVGAIVLAGSEKAFAAGADIKEMQGLDFVDGYLADFLGGWEHVANARKPMIAAVSGFALGGGCELAMMCDFIIASETAKFGQPEITLGVIPGMGGSQRLTRAVGKAKAMDLILTGRMMDAAEAERSGLVSRVVAPDRLLEEALGAAEKIASFSLPAAMMAKEAVNRSLELTLAEGLRFERRLFQSLFATEDQKEGMAAFVAKRKAEFKHR</sequence>
<proteinExistence type="inferred from homology"/>
<gene>
    <name type="primary">fadB1</name>
    <name type="ordered locus">R00366</name>
    <name type="ORF">SMc01153</name>
</gene>
<protein>
    <recommendedName>
        <fullName>Probable enoyl-CoA hydratase</fullName>
        <ecNumber>4.2.1.17</ecNumber>
    </recommendedName>
</protein>
<accession>Q52995</accession>